<feature type="chain" id="PRO_0000169430" description="Uncharacterized protein YqjD">
    <location>
        <begin position="1"/>
        <end position="101"/>
    </location>
</feature>
<feature type="transmembrane region" description="Helical" evidence="2">
    <location>
        <begin position="81"/>
        <end position="98"/>
    </location>
</feature>
<proteinExistence type="inferred from homology"/>
<name>YQJD_ECOL6</name>
<dbReference type="EMBL" id="AE014075">
    <property type="protein sequence ID" value="AAN82301.1"/>
    <property type="molecule type" value="Genomic_DNA"/>
</dbReference>
<dbReference type="RefSeq" id="WP_000031415.1">
    <property type="nucleotide sequence ID" value="NZ_CP051263.1"/>
</dbReference>
<dbReference type="SMR" id="P64582"/>
<dbReference type="STRING" id="199310.c3856"/>
<dbReference type="KEGG" id="ecc:c3856"/>
<dbReference type="eggNOG" id="COG4575">
    <property type="taxonomic scope" value="Bacteria"/>
</dbReference>
<dbReference type="HOGENOM" id="CLU_132623_4_2_6"/>
<dbReference type="BioCyc" id="ECOL199310:C3856-MONOMER"/>
<dbReference type="Proteomes" id="UP000001410">
    <property type="component" value="Chromosome"/>
</dbReference>
<dbReference type="GO" id="GO:0005886">
    <property type="term" value="C:plasma membrane"/>
    <property type="evidence" value="ECO:0007669"/>
    <property type="project" value="UniProtKB-SubCell"/>
</dbReference>
<dbReference type="GO" id="GO:0043022">
    <property type="term" value="F:ribosome binding"/>
    <property type="evidence" value="ECO:0007669"/>
    <property type="project" value="InterPro"/>
</dbReference>
<dbReference type="InterPro" id="IPR043605">
    <property type="entry name" value="DUF883_C"/>
</dbReference>
<dbReference type="InterPro" id="IPR043604">
    <property type="entry name" value="DUF883_N"/>
</dbReference>
<dbReference type="InterPro" id="IPR010279">
    <property type="entry name" value="YqjD/ElaB"/>
</dbReference>
<dbReference type="PANTHER" id="PTHR35893:SF3">
    <property type="entry name" value="INNER MEMBRANE PROTEIN"/>
    <property type="match status" value="1"/>
</dbReference>
<dbReference type="PANTHER" id="PTHR35893">
    <property type="entry name" value="INNER MEMBRANE PROTEIN-RELATED"/>
    <property type="match status" value="1"/>
</dbReference>
<dbReference type="Pfam" id="PF05957">
    <property type="entry name" value="DUF883"/>
    <property type="match status" value="1"/>
</dbReference>
<dbReference type="Pfam" id="PF19029">
    <property type="entry name" value="DUF883_C"/>
    <property type="match status" value="1"/>
</dbReference>
<protein>
    <recommendedName>
        <fullName>Uncharacterized protein YqjD</fullName>
    </recommendedName>
</protein>
<reference key="1">
    <citation type="journal article" date="2002" name="Proc. Natl. Acad. Sci. U.S.A.">
        <title>Extensive mosaic structure revealed by the complete genome sequence of uropathogenic Escherichia coli.</title>
        <authorList>
            <person name="Welch R.A."/>
            <person name="Burland V."/>
            <person name="Plunkett G. III"/>
            <person name="Redford P."/>
            <person name="Roesch P."/>
            <person name="Rasko D."/>
            <person name="Buckles E.L."/>
            <person name="Liou S.-R."/>
            <person name="Boutin A."/>
            <person name="Hackett J."/>
            <person name="Stroud D."/>
            <person name="Mayhew G.F."/>
            <person name="Rose D.J."/>
            <person name="Zhou S."/>
            <person name="Schwartz D.C."/>
            <person name="Perna N.T."/>
            <person name="Mobley H.L.T."/>
            <person name="Donnenberg M.S."/>
            <person name="Blattner F.R."/>
        </authorList>
    </citation>
    <scope>NUCLEOTIDE SEQUENCE [LARGE SCALE GENOMIC DNA]</scope>
    <source>
        <strain>CFT073 / ATCC 700928 / UPEC</strain>
    </source>
</reference>
<gene>
    <name type="primary">yqjD</name>
    <name type="ordered locus">c3856</name>
</gene>
<organism>
    <name type="scientific">Escherichia coli O6:H1 (strain CFT073 / ATCC 700928 / UPEC)</name>
    <dbReference type="NCBI Taxonomy" id="199310"/>
    <lineage>
        <taxon>Bacteria</taxon>
        <taxon>Pseudomonadati</taxon>
        <taxon>Pseudomonadota</taxon>
        <taxon>Gammaproteobacteria</taxon>
        <taxon>Enterobacterales</taxon>
        <taxon>Enterobacteriaceae</taxon>
        <taxon>Escherichia</taxon>
    </lineage>
</organism>
<keyword id="KW-0997">Cell inner membrane</keyword>
<keyword id="KW-1003">Cell membrane</keyword>
<keyword id="KW-0472">Membrane</keyword>
<keyword id="KW-1185">Reference proteome</keyword>
<keyword id="KW-0812">Transmembrane</keyword>
<keyword id="KW-1133">Transmembrane helix</keyword>
<accession>P64582</accession>
<accession>P42617</accession>
<comment type="subunit">
    <text evidence="1">Binds to 70S and 100S ribosomes, probably via the 30S subunit.</text>
</comment>
<comment type="subcellular location">
    <subcellularLocation>
        <location evidence="3">Cell inner membrane</location>
        <topology evidence="3">Single-pass membrane protein</topology>
    </subcellularLocation>
    <text evidence="1">Localizes to one cell pole in stationary phase.</text>
</comment>
<comment type="similarity">
    <text evidence="3">Belongs to the ElaB/YgaM/YqjD family.</text>
</comment>
<sequence>MSKEHTTEHLRAELKSLSDTLEEVLSSSGEKSKEELSKIRSKAEQALKQSRYRLGETGDAIAKQTRVAAARADEYVRENPWTGVGIGAAIGVVLGVLLSRR</sequence>
<evidence type="ECO:0000250" key="1"/>
<evidence type="ECO:0000255" key="2"/>
<evidence type="ECO:0000305" key="3"/>